<reference key="1">
    <citation type="journal article" date="1990" name="Gene">
        <title>Isolation and sequencing of the Alcaligenes denitrificans azurin-encoding gene: comparison with the genes encoding blue copper proteins from Pseudomonas aeruginosa and Alcaligenes faecalis.</title>
        <authorList>
            <person name="Hoitink C.W.G."/>
            <person name="Woudt L.P."/>
            <person name="Turenhout J.C.M."/>
            <person name="van de Kamp M."/>
            <person name="Canters G.W."/>
        </authorList>
    </citation>
    <scope>NUCLEOTIDE SEQUENCE [GENOMIC DNA]</scope>
</reference>
<reference key="2">
    <citation type="submission" date="1974-12" db="PIR data bank">
        <authorList>
            <person name="Ambler R.P."/>
        </authorList>
    </citation>
    <scope>PROTEIN SEQUENCE OF 21-149</scope>
    <source>
        <strain>ATCC 15173 / DSM 30026 / JCM 5490 / NBRC 15125 / NCIMB 11961 / NCTC 8582 / 55B</strain>
    </source>
</reference>
<reference key="3">
    <citation type="book" date="1971" name="Developpements recents dans l'etude chimique de la structure des proteines">
        <editorList>
            <person name="Preverio A."/>
            <person name="Pechere J.-F."/>
            <person name="Coletti-preverio M.-A."/>
        </editorList>
        <authorList>
            <person name="Ambler R.P."/>
        </authorList>
    </citation>
    <scope>PARTIAL PROTEIN SEQUENCE</scope>
</reference>
<reference key="4">
    <citation type="journal article" date="1983" name="J. Mol. Biol.">
        <title>Structure of azurin from Alcaligenes denitrificans at 2.5-A resolution.</title>
        <authorList>
            <person name="Norris G.E."/>
            <person name="Anderson B.F."/>
            <person name="Baker E.N."/>
        </authorList>
    </citation>
    <scope>X-RAY CRYSTALLOGRAPHY (2.5 ANGSTROMS)</scope>
</reference>
<reference key="5">
    <citation type="journal article" date="1988" name="J. Mol. Biol.">
        <title>Structure of azurin from Alcaligenes denitrificans refinement at 1.8-A resolution and comparison of the two crystallographically independent molecules.</title>
        <authorList>
            <person name="Baker E.N."/>
        </authorList>
    </citation>
    <scope>X-RAY CRYSTALLOGRAPHY (1.8 ANGSTROMS)</scope>
</reference>
<reference key="6">
    <citation type="journal article" date="1993" name="J. Mol. Biol.">
        <title>X-ray analysis and spectroscopic characterization of M121Q azurin. A copper site model for stellacyanin.</title>
        <authorList>
            <person name="Romero A."/>
            <person name="Hoitink C.W."/>
            <person name="Nar H."/>
            <person name="Huber R."/>
            <person name="Messerschmidt A."/>
            <person name="Canters G.W."/>
        </authorList>
    </citation>
    <scope>X-RAY CRYSTALLOGRAPHY (1.94 ANGSTROMS) OF GLN-141</scope>
</reference>
<reference key="7">
    <citation type="journal article" date="1996" name="Biochemistry">
        <title>Paramagnetic cobalt and nickel derivatives of Alcaligenes denitrificans azurin and its M121Q mutant. A 1H NMR study.</title>
        <authorList>
            <person name="Kroes S."/>
            <person name="Wamerdam G.C.M."/>
            <person name="Canters G.W."/>
        </authorList>
    </citation>
    <scope>STRUCTURE BY NMR</scope>
</reference>
<name>AZUR_ACHDE</name>
<sequence length="149" mass="15924">MLAKATLAIVLSAASLPVLAAQCEATIESNDAMQYNLKEMVVDKSCKQFTVHLKHVGKMAKVAMGHNWVLTKEADKQGVATDGMNAGLAQDYVKAGDTRVIAHTKVIGGGESDSVTFDVSKLTPGEAYAYFCSFPGHWAMMKGTLKLSN</sequence>
<proteinExistence type="evidence at protein level"/>
<dbReference type="EMBL" id="M30388">
    <property type="protein sequence ID" value="AAA21954.1"/>
    <property type="molecule type" value="Genomic_DNA"/>
</dbReference>
<dbReference type="PIR" id="JQ0643">
    <property type="entry name" value="AZALCD"/>
</dbReference>
<dbReference type="RefSeq" id="WP_062681289.1">
    <property type="nucleotide sequence ID" value="NZ_UFRY01000001.1"/>
</dbReference>
<dbReference type="PDB" id="1A4A">
    <property type="method" value="X-ray"/>
    <property type="resolution" value="1.89 A"/>
    <property type="chains" value="A/B=21-149"/>
</dbReference>
<dbReference type="PDB" id="1A4B">
    <property type="method" value="X-ray"/>
    <property type="resolution" value="1.91 A"/>
    <property type="chains" value="A/B=21-149"/>
</dbReference>
<dbReference type="PDB" id="1A4C">
    <property type="method" value="X-ray"/>
    <property type="resolution" value="2.45 A"/>
    <property type="chains" value="A/B/C/D=21-149"/>
</dbReference>
<dbReference type="PDB" id="1AIZ">
    <property type="method" value="X-ray"/>
    <property type="resolution" value="1.80 A"/>
    <property type="chains" value="A/B=21-149"/>
</dbReference>
<dbReference type="PDB" id="1AZB">
    <property type="method" value="X-ray"/>
    <property type="resolution" value="2.20 A"/>
    <property type="chains" value="A/B=21-149"/>
</dbReference>
<dbReference type="PDB" id="1AZC">
    <property type="method" value="X-ray"/>
    <property type="resolution" value="1.80 A"/>
    <property type="chains" value="A/B=21-149"/>
</dbReference>
<dbReference type="PDB" id="1URI">
    <property type="method" value="X-ray"/>
    <property type="resolution" value="1.94 A"/>
    <property type="chains" value="A/B=21-149"/>
</dbReference>
<dbReference type="PDB" id="2AZA">
    <property type="method" value="X-ray"/>
    <property type="resolution" value="1.80 A"/>
    <property type="chains" value="A/B=21-149"/>
</dbReference>
<dbReference type="PDBsum" id="1A4A"/>
<dbReference type="PDBsum" id="1A4B"/>
<dbReference type="PDBsum" id="1A4C"/>
<dbReference type="PDBsum" id="1AIZ"/>
<dbReference type="PDBsum" id="1AZB"/>
<dbReference type="PDBsum" id="1AZC"/>
<dbReference type="PDBsum" id="1URI"/>
<dbReference type="PDBsum" id="2AZA"/>
<dbReference type="SMR" id="P00280"/>
<dbReference type="STRING" id="32002.BVK87_22540"/>
<dbReference type="GeneID" id="92845278"/>
<dbReference type="OrthoDB" id="9814063at2"/>
<dbReference type="EvolutionaryTrace" id="P00280"/>
<dbReference type="GO" id="GO:0042597">
    <property type="term" value="C:periplasmic space"/>
    <property type="evidence" value="ECO:0007669"/>
    <property type="project" value="UniProtKB-SubCell"/>
</dbReference>
<dbReference type="GO" id="GO:0005507">
    <property type="term" value="F:copper ion binding"/>
    <property type="evidence" value="ECO:0007669"/>
    <property type="project" value="InterPro"/>
</dbReference>
<dbReference type="GO" id="GO:0009055">
    <property type="term" value="F:electron transfer activity"/>
    <property type="evidence" value="ECO:0007669"/>
    <property type="project" value="InterPro"/>
</dbReference>
<dbReference type="CDD" id="cd13922">
    <property type="entry name" value="Azurin"/>
    <property type="match status" value="1"/>
</dbReference>
<dbReference type="FunFam" id="2.60.40.420:FF:000040">
    <property type="entry name" value="Azurin"/>
    <property type="match status" value="1"/>
</dbReference>
<dbReference type="Gene3D" id="2.60.40.420">
    <property type="entry name" value="Cupredoxins - blue copper proteins"/>
    <property type="match status" value="1"/>
</dbReference>
<dbReference type="InterPro" id="IPR014068">
    <property type="entry name" value="Azurin"/>
</dbReference>
<dbReference type="InterPro" id="IPR000923">
    <property type="entry name" value="BlueCu_1"/>
</dbReference>
<dbReference type="InterPro" id="IPR028871">
    <property type="entry name" value="BlueCu_1_BS"/>
</dbReference>
<dbReference type="InterPro" id="IPR050845">
    <property type="entry name" value="Cu-binding_ET"/>
</dbReference>
<dbReference type="InterPro" id="IPR008972">
    <property type="entry name" value="Cupredoxin"/>
</dbReference>
<dbReference type="NCBIfam" id="TIGR02695">
    <property type="entry name" value="azurin"/>
    <property type="match status" value="1"/>
</dbReference>
<dbReference type="PANTHER" id="PTHR38439">
    <property type="entry name" value="AURACYANIN-B"/>
    <property type="match status" value="1"/>
</dbReference>
<dbReference type="PANTHER" id="PTHR38439:SF2">
    <property type="entry name" value="OUTER MEMBRANE PROTEIN H.8"/>
    <property type="match status" value="1"/>
</dbReference>
<dbReference type="Pfam" id="PF00127">
    <property type="entry name" value="Copper-bind"/>
    <property type="match status" value="1"/>
</dbReference>
<dbReference type="SUPFAM" id="SSF49503">
    <property type="entry name" value="Cupredoxins"/>
    <property type="match status" value="1"/>
</dbReference>
<dbReference type="PROSITE" id="PS00196">
    <property type="entry name" value="COPPER_BLUE"/>
    <property type="match status" value="1"/>
</dbReference>
<accession>P00280</accession>
<keyword id="KW-0002">3D-structure</keyword>
<keyword id="KW-0186">Copper</keyword>
<keyword id="KW-0903">Direct protein sequencing</keyword>
<keyword id="KW-1015">Disulfide bond</keyword>
<keyword id="KW-0249">Electron transport</keyword>
<keyword id="KW-0479">Metal-binding</keyword>
<keyword id="KW-0574">Periplasm</keyword>
<keyword id="KW-0732">Signal</keyword>
<keyword id="KW-0813">Transport</keyword>
<organism>
    <name type="scientific">Achromobacter denitrificans</name>
    <name type="common">Alcaligenes denitrificans</name>
    <dbReference type="NCBI Taxonomy" id="32002"/>
    <lineage>
        <taxon>Bacteria</taxon>
        <taxon>Pseudomonadati</taxon>
        <taxon>Pseudomonadota</taxon>
        <taxon>Betaproteobacteria</taxon>
        <taxon>Burkholderiales</taxon>
        <taxon>Alcaligenaceae</taxon>
        <taxon>Achromobacter</taxon>
    </lineage>
</organism>
<protein>
    <recommendedName>
        <fullName>Azurin</fullName>
    </recommendedName>
</protein>
<evidence type="ECO:0000269" key="1">
    <source>
    </source>
</evidence>
<evidence type="ECO:0000269" key="2">
    <source ref="2"/>
</evidence>
<evidence type="ECO:0000305" key="3"/>
<evidence type="ECO:0007829" key="4">
    <source>
        <dbReference type="PDB" id="1A4A"/>
    </source>
</evidence>
<evidence type="ECO:0007829" key="5">
    <source>
        <dbReference type="PDB" id="1A4C"/>
    </source>
</evidence>
<evidence type="ECO:0007829" key="6">
    <source>
        <dbReference type="PDB" id="1AIZ"/>
    </source>
</evidence>
<gene>
    <name type="primary">azu</name>
</gene>
<comment type="function">
    <text>Transfers electrons from cytochrome c551 to cytochrome oxidase.</text>
</comment>
<comment type="subcellular location">
    <subcellularLocation>
        <location>Periplasm</location>
    </subcellularLocation>
</comment>
<feature type="signal peptide" evidence="2">
    <location>
        <begin position="1"/>
        <end position="20"/>
    </location>
</feature>
<feature type="chain" id="PRO_0000002858" description="Azurin">
    <location>
        <begin position="21"/>
        <end position="149"/>
    </location>
</feature>
<feature type="domain" description="Plastocyanin-like">
    <location>
        <begin position="21"/>
        <end position="149"/>
    </location>
</feature>
<feature type="binding site" evidence="1">
    <location>
        <position position="66"/>
    </location>
    <ligand>
        <name>Cu cation</name>
        <dbReference type="ChEBI" id="CHEBI:23378"/>
    </ligand>
</feature>
<feature type="binding site" evidence="1">
    <location>
        <position position="132"/>
    </location>
    <ligand>
        <name>Cu cation</name>
        <dbReference type="ChEBI" id="CHEBI:23378"/>
    </ligand>
</feature>
<feature type="binding site" evidence="1">
    <location>
        <position position="137"/>
    </location>
    <ligand>
        <name>Cu cation</name>
        <dbReference type="ChEBI" id="CHEBI:23378"/>
    </ligand>
</feature>
<feature type="binding site" evidence="1">
    <location>
        <position position="141"/>
    </location>
    <ligand>
        <name>Cu cation</name>
        <dbReference type="ChEBI" id="CHEBI:23378"/>
    </ligand>
</feature>
<feature type="disulfide bond">
    <location>
        <begin position="23"/>
        <end position="46"/>
    </location>
</feature>
<feature type="sequence conflict" description="In Ref. 2; AA sequence." evidence="3" ref="2">
    <original>Q</original>
    <variation>E</variation>
    <location>
        <position position="77"/>
    </location>
</feature>
<feature type="strand" evidence="6">
    <location>
        <begin position="23"/>
        <end position="29"/>
    </location>
</feature>
<feature type="strand" evidence="4">
    <location>
        <begin position="31"/>
        <end position="33"/>
    </location>
</feature>
<feature type="strand" evidence="6">
    <location>
        <begin position="38"/>
        <end position="43"/>
    </location>
</feature>
<feature type="strand" evidence="6">
    <location>
        <begin position="47"/>
        <end position="55"/>
    </location>
</feature>
<feature type="strand" evidence="5">
    <location>
        <begin position="57"/>
        <end position="59"/>
    </location>
</feature>
<feature type="helix" evidence="6">
    <location>
        <begin position="61"/>
        <end position="64"/>
    </location>
</feature>
<feature type="strand" evidence="6">
    <location>
        <begin position="69"/>
        <end position="72"/>
    </location>
</feature>
<feature type="turn" evidence="6">
    <location>
        <begin position="73"/>
        <end position="75"/>
    </location>
</feature>
<feature type="helix" evidence="6">
    <location>
        <begin position="76"/>
        <end position="84"/>
    </location>
</feature>
<feature type="helix" evidence="6">
    <location>
        <begin position="88"/>
        <end position="90"/>
    </location>
</feature>
<feature type="strand" evidence="6">
    <location>
        <begin position="100"/>
        <end position="103"/>
    </location>
</feature>
<feature type="strand" evidence="6">
    <location>
        <begin position="112"/>
        <end position="118"/>
    </location>
</feature>
<feature type="helix" evidence="6">
    <location>
        <begin position="119"/>
        <end position="121"/>
    </location>
</feature>
<feature type="strand" evidence="6">
    <location>
        <begin position="127"/>
        <end position="131"/>
    </location>
</feature>
<feature type="helix" evidence="6">
    <location>
        <begin position="137"/>
        <end position="139"/>
    </location>
</feature>
<feature type="strand" evidence="6">
    <location>
        <begin position="141"/>
        <end position="148"/>
    </location>
</feature>